<sequence>MSDRNPLIDADRRADEDNTLRPQTLDDFVGQAAARANLKVFIEAAKVRGEALDHVLFVGPPGLGKTTLAQIMAKELGVNFRSTSGPVIAKAGDLAALLTNLEERDVLFIDEIHRLSPAVEEILYPAMEDFQLDLIIGEGPAARSVKIDLAKFTLVAATTRLGLLTTPLRDRFGIPVRLNFYTVEELEYIVRRGARIMQMGISSDGAREVARRSRGTPRIAGRLLRRVRDFALVAGADIIDRRIADEALSRLEVDNRGLDQLDRRYLNIIARNFGGGPVGIETIAAGLSEPRDAIEDIIEPYLIQQGFLQRTPRGRVLTAVAWQHLGLPAPAEIIQQSQYGLFMEDE</sequence>
<gene>
    <name evidence="1" type="primary">ruvB</name>
    <name type="ordered locus">BR1702</name>
    <name type="ordered locus">BS1330_I1696</name>
</gene>
<evidence type="ECO:0000255" key="1">
    <source>
        <dbReference type="HAMAP-Rule" id="MF_00016"/>
    </source>
</evidence>
<protein>
    <recommendedName>
        <fullName evidence="1">Holliday junction branch migration complex subunit RuvB</fullName>
        <ecNumber evidence="1">3.6.4.-</ecNumber>
    </recommendedName>
</protein>
<accession>Q8FZ02</accession>
<accession>G0K6W4</accession>
<comment type="function">
    <text evidence="1">The RuvA-RuvB-RuvC complex processes Holliday junction (HJ) DNA during genetic recombination and DNA repair, while the RuvA-RuvB complex plays an important role in the rescue of blocked DNA replication forks via replication fork reversal (RFR). RuvA specifically binds to HJ cruciform DNA, conferring on it an open structure. The RuvB hexamer acts as an ATP-dependent pump, pulling dsDNA into and through the RuvAB complex. RuvB forms 2 homohexamers on either side of HJ DNA bound by 1 or 2 RuvA tetramers; 4 subunits per hexamer contact DNA at a time. Coordinated motions by a converter formed by DNA-disengaged RuvB subunits stimulates ATP hydrolysis and nucleotide exchange. Immobilization of the converter enables RuvB to convert the ATP-contained energy into a lever motion, pulling 2 nucleotides of DNA out of the RuvA tetramer per ATP hydrolyzed, thus driving DNA branch migration. The RuvB motors rotate together with the DNA substrate, which together with the progressing nucleotide cycle form the mechanistic basis for DNA recombination by continuous HJ branch migration. Branch migration allows RuvC to scan DNA until it finds its consensus sequence, where it cleaves and resolves cruciform DNA.</text>
</comment>
<comment type="catalytic activity">
    <reaction evidence="1">
        <text>ATP + H2O = ADP + phosphate + H(+)</text>
        <dbReference type="Rhea" id="RHEA:13065"/>
        <dbReference type="ChEBI" id="CHEBI:15377"/>
        <dbReference type="ChEBI" id="CHEBI:15378"/>
        <dbReference type="ChEBI" id="CHEBI:30616"/>
        <dbReference type="ChEBI" id="CHEBI:43474"/>
        <dbReference type="ChEBI" id="CHEBI:456216"/>
    </reaction>
</comment>
<comment type="subunit">
    <text evidence="1">Homohexamer. Forms an RuvA(8)-RuvB(12)-Holliday junction (HJ) complex. HJ DNA is sandwiched between 2 RuvA tetramers; dsDNA enters through RuvA and exits via RuvB. An RuvB hexamer assembles on each DNA strand where it exits the tetramer. Each RuvB hexamer is contacted by two RuvA subunits (via domain III) on 2 adjacent RuvB subunits; this complex drives branch migration. In the full resolvosome a probable DNA-RuvA(4)-RuvB(12)-RuvC(2) complex forms which resolves the HJ.</text>
</comment>
<comment type="subcellular location">
    <subcellularLocation>
        <location evidence="1">Cytoplasm</location>
    </subcellularLocation>
</comment>
<comment type="domain">
    <text evidence="1">Has 3 domains, the large (RuvB-L) and small ATPase (RuvB-S) domains and the C-terminal head (RuvB-H) domain. The head domain binds DNA, while the ATPase domains jointly bind ATP, ADP or are empty depending on the state of the subunit in the translocation cycle. During a single DNA translocation step the structure of each domain remains the same, but their relative positions change.</text>
</comment>
<comment type="similarity">
    <text evidence="1">Belongs to the RuvB family.</text>
</comment>
<proteinExistence type="inferred from homology"/>
<dbReference type="EC" id="3.6.4.-" evidence="1"/>
<dbReference type="EMBL" id="AE014291">
    <property type="protein sequence ID" value="AAN30602.1"/>
    <property type="molecule type" value="Genomic_DNA"/>
</dbReference>
<dbReference type="EMBL" id="CP002997">
    <property type="protein sequence ID" value="AEM19019.1"/>
    <property type="molecule type" value="Genomic_DNA"/>
</dbReference>
<dbReference type="RefSeq" id="WP_002964791.1">
    <property type="nucleotide sequence ID" value="NZ_KN046804.1"/>
</dbReference>
<dbReference type="SMR" id="Q8FZ02"/>
<dbReference type="GeneID" id="97533144"/>
<dbReference type="KEGG" id="bms:BR1702"/>
<dbReference type="KEGG" id="bsi:BS1330_I1696"/>
<dbReference type="PATRIC" id="fig|204722.21.peg.2396"/>
<dbReference type="HOGENOM" id="CLU_055599_1_0_5"/>
<dbReference type="PhylomeDB" id="Q8FZ02"/>
<dbReference type="Proteomes" id="UP000007104">
    <property type="component" value="Chromosome I"/>
</dbReference>
<dbReference type="GO" id="GO:0005737">
    <property type="term" value="C:cytoplasm"/>
    <property type="evidence" value="ECO:0007669"/>
    <property type="project" value="UniProtKB-SubCell"/>
</dbReference>
<dbReference type="GO" id="GO:0048476">
    <property type="term" value="C:Holliday junction resolvase complex"/>
    <property type="evidence" value="ECO:0007669"/>
    <property type="project" value="UniProtKB-UniRule"/>
</dbReference>
<dbReference type="GO" id="GO:0005524">
    <property type="term" value="F:ATP binding"/>
    <property type="evidence" value="ECO:0007669"/>
    <property type="project" value="UniProtKB-UniRule"/>
</dbReference>
<dbReference type="GO" id="GO:0016887">
    <property type="term" value="F:ATP hydrolysis activity"/>
    <property type="evidence" value="ECO:0007669"/>
    <property type="project" value="InterPro"/>
</dbReference>
<dbReference type="GO" id="GO:0000400">
    <property type="term" value="F:four-way junction DNA binding"/>
    <property type="evidence" value="ECO:0007669"/>
    <property type="project" value="UniProtKB-UniRule"/>
</dbReference>
<dbReference type="GO" id="GO:0009378">
    <property type="term" value="F:four-way junction helicase activity"/>
    <property type="evidence" value="ECO:0007669"/>
    <property type="project" value="InterPro"/>
</dbReference>
<dbReference type="GO" id="GO:0006310">
    <property type="term" value="P:DNA recombination"/>
    <property type="evidence" value="ECO:0007669"/>
    <property type="project" value="UniProtKB-UniRule"/>
</dbReference>
<dbReference type="GO" id="GO:0006281">
    <property type="term" value="P:DNA repair"/>
    <property type="evidence" value="ECO:0007669"/>
    <property type="project" value="UniProtKB-UniRule"/>
</dbReference>
<dbReference type="CDD" id="cd00009">
    <property type="entry name" value="AAA"/>
    <property type="match status" value="1"/>
</dbReference>
<dbReference type="Gene3D" id="1.10.8.60">
    <property type="match status" value="1"/>
</dbReference>
<dbReference type="Gene3D" id="3.40.50.300">
    <property type="entry name" value="P-loop containing nucleotide triphosphate hydrolases"/>
    <property type="match status" value="1"/>
</dbReference>
<dbReference type="Gene3D" id="1.10.10.10">
    <property type="entry name" value="Winged helix-like DNA-binding domain superfamily/Winged helix DNA-binding domain"/>
    <property type="match status" value="1"/>
</dbReference>
<dbReference type="HAMAP" id="MF_00016">
    <property type="entry name" value="DNA_HJ_migration_RuvB"/>
    <property type="match status" value="1"/>
</dbReference>
<dbReference type="InterPro" id="IPR003593">
    <property type="entry name" value="AAA+_ATPase"/>
</dbReference>
<dbReference type="InterPro" id="IPR041445">
    <property type="entry name" value="AAA_lid_4"/>
</dbReference>
<dbReference type="InterPro" id="IPR000641">
    <property type="entry name" value="CbxX/CfxQ"/>
</dbReference>
<dbReference type="InterPro" id="IPR004605">
    <property type="entry name" value="DNA_helicase_Holl-junc_RuvB"/>
</dbReference>
<dbReference type="InterPro" id="IPR027417">
    <property type="entry name" value="P-loop_NTPase"/>
</dbReference>
<dbReference type="InterPro" id="IPR008824">
    <property type="entry name" value="RuvB-like_N"/>
</dbReference>
<dbReference type="InterPro" id="IPR008823">
    <property type="entry name" value="RuvB_C"/>
</dbReference>
<dbReference type="InterPro" id="IPR036388">
    <property type="entry name" value="WH-like_DNA-bd_sf"/>
</dbReference>
<dbReference type="InterPro" id="IPR036390">
    <property type="entry name" value="WH_DNA-bd_sf"/>
</dbReference>
<dbReference type="NCBIfam" id="NF000868">
    <property type="entry name" value="PRK00080.1"/>
    <property type="match status" value="1"/>
</dbReference>
<dbReference type="NCBIfam" id="TIGR00635">
    <property type="entry name" value="ruvB"/>
    <property type="match status" value="1"/>
</dbReference>
<dbReference type="PANTHER" id="PTHR42848">
    <property type="match status" value="1"/>
</dbReference>
<dbReference type="PANTHER" id="PTHR42848:SF1">
    <property type="entry name" value="HOLLIDAY JUNCTION BRANCH MIGRATION COMPLEX SUBUNIT RUVB"/>
    <property type="match status" value="1"/>
</dbReference>
<dbReference type="Pfam" id="PF17864">
    <property type="entry name" value="AAA_lid_4"/>
    <property type="match status" value="1"/>
</dbReference>
<dbReference type="Pfam" id="PF05491">
    <property type="entry name" value="RuvB_C"/>
    <property type="match status" value="1"/>
</dbReference>
<dbReference type="Pfam" id="PF05496">
    <property type="entry name" value="RuvB_N"/>
    <property type="match status" value="1"/>
</dbReference>
<dbReference type="PRINTS" id="PR00819">
    <property type="entry name" value="CBXCFQXSUPER"/>
</dbReference>
<dbReference type="SMART" id="SM00382">
    <property type="entry name" value="AAA"/>
    <property type="match status" value="1"/>
</dbReference>
<dbReference type="SUPFAM" id="SSF52540">
    <property type="entry name" value="P-loop containing nucleoside triphosphate hydrolases"/>
    <property type="match status" value="1"/>
</dbReference>
<dbReference type="SUPFAM" id="SSF46785">
    <property type="entry name" value="Winged helix' DNA-binding domain"/>
    <property type="match status" value="1"/>
</dbReference>
<keyword id="KW-0067">ATP-binding</keyword>
<keyword id="KW-0963">Cytoplasm</keyword>
<keyword id="KW-0227">DNA damage</keyword>
<keyword id="KW-0233">DNA recombination</keyword>
<keyword id="KW-0234">DNA repair</keyword>
<keyword id="KW-0238">DNA-binding</keyword>
<keyword id="KW-0378">Hydrolase</keyword>
<keyword id="KW-0547">Nucleotide-binding</keyword>
<reference key="1">
    <citation type="journal article" date="2002" name="Proc. Natl. Acad. Sci. U.S.A.">
        <title>The Brucella suis genome reveals fundamental similarities between animal and plant pathogens and symbionts.</title>
        <authorList>
            <person name="Paulsen I.T."/>
            <person name="Seshadri R."/>
            <person name="Nelson K.E."/>
            <person name="Eisen J.A."/>
            <person name="Heidelberg J.F."/>
            <person name="Read T.D."/>
            <person name="Dodson R.J."/>
            <person name="Umayam L.A."/>
            <person name="Brinkac L.M."/>
            <person name="Beanan M.J."/>
            <person name="Daugherty S.C."/>
            <person name="DeBoy R.T."/>
            <person name="Durkin A.S."/>
            <person name="Kolonay J.F."/>
            <person name="Madupu R."/>
            <person name="Nelson W.C."/>
            <person name="Ayodeji B."/>
            <person name="Kraul M."/>
            <person name="Shetty J."/>
            <person name="Malek J.A."/>
            <person name="Van Aken S.E."/>
            <person name="Riedmuller S."/>
            <person name="Tettelin H."/>
            <person name="Gill S.R."/>
            <person name="White O."/>
            <person name="Salzberg S.L."/>
            <person name="Hoover D.L."/>
            <person name="Lindler L.E."/>
            <person name="Halling S.M."/>
            <person name="Boyle S.M."/>
            <person name="Fraser C.M."/>
        </authorList>
    </citation>
    <scope>NUCLEOTIDE SEQUENCE [LARGE SCALE GENOMIC DNA]</scope>
    <source>
        <strain>1330</strain>
    </source>
</reference>
<reference key="2">
    <citation type="journal article" date="2011" name="J. Bacteriol.">
        <title>Revised genome sequence of Brucella suis 1330.</title>
        <authorList>
            <person name="Tae H."/>
            <person name="Shallom S."/>
            <person name="Settlage R."/>
            <person name="Preston D."/>
            <person name="Adams L.G."/>
            <person name="Garner H.R."/>
        </authorList>
    </citation>
    <scope>NUCLEOTIDE SEQUENCE [LARGE SCALE GENOMIC DNA]</scope>
    <source>
        <strain>1330</strain>
    </source>
</reference>
<feature type="chain" id="PRO_0000165506" description="Holliday junction branch migration complex subunit RuvB">
    <location>
        <begin position="1"/>
        <end position="346"/>
    </location>
</feature>
<feature type="region of interest" description="Large ATPase domain (RuvB-L)" evidence="1">
    <location>
        <begin position="1"/>
        <end position="181"/>
    </location>
</feature>
<feature type="region of interest" description="Small ATPAse domain (RuvB-S)" evidence="1">
    <location>
        <begin position="182"/>
        <end position="252"/>
    </location>
</feature>
<feature type="region of interest" description="Head domain (RuvB-H)" evidence="1">
    <location>
        <begin position="255"/>
        <end position="346"/>
    </location>
</feature>
<feature type="binding site" evidence="1">
    <location>
        <position position="20"/>
    </location>
    <ligand>
        <name>ATP</name>
        <dbReference type="ChEBI" id="CHEBI:30616"/>
    </ligand>
</feature>
<feature type="binding site" evidence="1">
    <location>
        <position position="21"/>
    </location>
    <ligand>
        <name>ATP</name>
        <dbReference type="ChEBI" id="CHEBI:30616"/>
    </ligand>
</feature>
<feature type="binding site" evidence="1">
    <location>
        <position position="62"/>
    </location>
    <ligand>
        <name>ATP</name>
        <dbReference type="ChEBI" id="CHEBI:30616"/>
    </ligand>
</feature>
<feature type="binding site" evidence="1">
    <location>
        <position position="65"/>
    </location>
    <ligand>
        <name>ATP</name>
        <dbReference type="ChEBI" id="CHEBI:30616"/>
    </ligand>
</feature>
<feature type="binding site" evidence="1">
    <location>
        <position position="66"/>
    </location>
    <ligand>
        <name>ATP</name>
        <dbReference type="ChEBI" id="CHEBI:30616"/>
    </ligand>
</feature>
<feature type="binding site" evidence="1">
    <location>
        <position position="66"/>
    </location>
    <ligand>
        <name>Mg(2+)</name>
        <dbReference type="ChEBI" id="CHEBI:18420"/>
    </ligand>
</feature>
<feature type="binding site" evidence="1">
    <location>
        <position position="67"/>
    </location>
    <ligand>
        <name>ATP</name>
        <dbReference type="ChEBI" id="CHEBI:30616"/>
    </ligand>
</feature>
<feature type="binding site" evidence="1">
    <location>
        <begin position="128"/>
        <end position="130"/>
    </location>
    <ligand>
        <name>ATP</name>
        <dbReference type="ChEBI" id="CHEBI:30616"/>
    </ligand>
</feature>
<feature type="binding site" evidence="1">
    <location>
        <position position="171"/>
    </location>
    <ligand>
        <name>ATP</name>
        <dbReference type="ChEBI" id="CHEBI:30616"/>
    </ligand>
</feature>
<feature type="binding site" evidence="1">
    <location>
        <position position="181"/>
    </location>
    <ligand>
        <name>ATP</name>
        <dbReference type="ChEBI" id="CHEBI:30616"/>
    </ligand>
</feature>
<feature type="binding site" evidence="1">
    <location>
        <position position="218"/>
    </location>
    <ligand>
        <name>ATP</name>
        <dbReference type="ChEBI" id="CHEBI:30616"/>
    </ligand>
</feature>
<feature type="binding site" evidence="1">
    <location>
        <position position="291"/>
    </location>
    <ligand>
        <name>DNA</name>
        <dbReference type="ChEBI" id="CHEBI:16991"/>
    </ligand>
</feature>
<feature type="binding site" evidence="1">
    <location>
        <position position="310"/>
    </location>
    <ligand>
        <name>DNA</name>
        <dbReference type="ChEBI" id="CHEBI:16991"/>
    </ligand>
</feature>
<feature type="binding site" evidence="1">
    <location>
        <position position="315"/>
    </location>
    <ligand>
        <name>DNA</name>
        <dbReference type="ChEBI" id="CHEBI:16991"/>
    </ligand>
</feature>
<organism>
    <name type="scientific">Brucella suis biovar 1 (strain 1330)</name>
    <dbReference type="NCBI Taxonomy" id="204722"/>
    <lineage>
        <taxon>Bacteria</taxon>
        <taxon>Pseudomonadati</taxon>
        <taxon>Pseudomonadota</taxon>
        <taxon>Alphaproteobacteria</taxon>
        <taxon>Hyphomicrobiales</taxon>
        <taxon>Brucellaceae</taxon>
        <taxon>Brucella/Ochrobactrum group</taxon>
        <taxon>Brucella</taxon>
    </lineage>
</organism>
<name>RUVB_BRUSU</name>